<sequence length="201" mass="21474">MAKRVTGPEIEKLIQLLAKVPGLGPRSARRAALHLVKKKEQLLGPLAEAMGEAHRKVKICSCCGNVDTIDPCTVCTDERRDRSVIIVVEDVADLWALERAAALNAAYHVLGGTLSPLDGIGPDDLNIKGLVDRVAKGGVRELVIAVNATVEGQTTAHYITDQLEGMEVKITRLAHGVPVGGELDYLDEGTLTAALRARTTI</sequence>
<dbReference type="EMBL" id="CP001389">
    <property type="protein sequence ID" value="ACP27283.1"/>
    <property type="molecule type" value="Genomic_DNA"/>
</dbReference>
<dbReference type="RefSeq" id="WP_012710028.1">
    <property type="nucleotide sequence ID" value="NC_012587.1"/>
</dbReference>
<dbReference type="RefSeq" id="YP_002828036.1">
    <property type="nucleotide sequence ID" value="NC_012587.1"/>
</dbReference>
<dbReference type="SMR" id="C3MC58"/>
<dbReference type="STRING" id="394.NGR_c35600"/>
<dbReference type="KEGG" id="rhi:NGR_c35600"/>
<dbReference type="PATRIC" id="fig|394.7.peg.6411"/>
<dbReference type="eggNOG" id="COG0353">
    <property type="taxonomic scope" value="Bacteria"/>
</dbReference>
<dbReference type="HOGENOM" id="CLU_060739_1_1_5"/>
<dbReference type="OrthoDB" id="9802672at2"/>
<dbReference type="Proteomes" id="UP000001054">
    <property type="component" value="Chromosome"/>
</dbReference>
<dbReference type="GO" id="GO:0003677">
    <property type="term" value="F:DNA binding"/>
    <property type="evidence" value="ECO:0007669"/>
    <property type="project" value="UniProtKB-UniRule"/>
</dbReference>
<dbReference type="GO" id="GO:0008270">
    <property type="term" value="F:zinc ion binding"/>
    <property type="evidence" value="ECO:0007669"/>
    <property type="project" value="UniProtKB-KW"/>
</dbReference>
<dbReference type="GO" id="GO:0006310">
    <property type="term" value="P:DNA recombination"/>
    <property type="evidence" value="ECO:0007669"/>
    <property type="project" value="UniProtKB-UniRule"/>
</dbReference>
<dbReference type="GO" id="GO:0006281">
    <property type="term" value="P:DNA repair"/>
    <property type="evidence" value="ECO:0007669"/>
    <property type="project" value="UniProtKB-UniRule"/>
</dbReference>
<dbReference type="CDD" id="cd01025">
    <property type="entry name" value="TOPRIM_recR"/>
    <property type="match status" value="1"/>
</dbReference>
<dbReference type="Gene3D" id="3.40.1360.10">
    <property type="match status" value="1"/>
</dbReference>
<dbReference type="Gene3D" id="6.10.250.240">
    <property type="match status" value="1"/>
</dbReference>
<dbReference type="Gene3D" id="1.10.8.420">
    <property type="entry name" value="RecR Domain 1"/>
    <property type="match status" value="1"/>
</dbReference>
<dbReference type="HAMAP" id="MF_00017">
    <property type="entry name" value="RecR"/>
    <property type="match status" value="1"/>
</dbReference>
<dbReference type="InterPro" id="IPR000093">
    <property type="entry name" value="DNA_Rcmb_RecR"/>
</dbReference>
<dbReference type="InterPro" id="IPR023627">
    <property type="entry name" value="Rcmb_RecR"/>
</dbReference>
<dbReference type="InterPro" id="IPR015967">
    <property type="entry name" value="Rcmb_RecR_Znf"/>
</dbReference>
<dbReference type="InterPro" id="IPR006171">
    <property type="entry name" value="TOPRIM_dom"/>
</dbReference>
<dbReference type="InterPro" id="IPR034137">
    <property type="entry name" value="TOPRIM_RecR"/>
</dbReference>
<dbReference type="NCBIfam" id="TIGR00615">
    <property type="entry name" value="recR"/>
    <property type="match status" value="1"/>
</dbReference>
<dbReference type="PANTHER" id="PTHR30446">
    <property type="entry name" value="RECOMBINATION PROTEIN RECR"/>
    <property type="match status" value="1"/>
</dbReference>
<dbReference type="PANTHER" id="PTHR30446:SF0">
    <property type="entry name" value="RECOMBINATION PROTEIN RECR"/>
    <property type="match status" value="1"/>
</dbReference>
<dbReference type="Pfam" id="PF21175">
    <property type="entry name" value="RecR_C"/>
    <property type="match status" value="1"/>
</dbReference>
<dbReference type="Pfam" id="PF21176">
    <property type="entry name" value="RecR_HhH"/>
    <property type="match status" value="1"/>
</dbReference>
<dbReference type="Pfam" id="PF13662">
    <property type="entry name" value="Toprim_4"/>
    <property type="match status" value="1"/>
</dbReference>
<dbReference type="SMART" id="SM00493">
    <property type="entry name" value="TOPRIM"/>
    <property type="match status" value="1"/>
</dbReference>
<dbReference type="SUPFAM" id="SSF111304">
    <property type="entry name" value="Recombination protein RecR"/>
    <property type="match status" value="1"/>
</dbReference>
<dbReference type="PROSITE" id="PS01300">
    <property type="entry name" value="RECR"/>
    <property type="match status" value="1"/>
</dbReference>
<dbReference type="PROSITE" id="PS50880">
    <property type="entry name" value="TOPRIM"/>
    <property type="match status" value="1"/>
</dbReference>
<organism>
    <name type="scientific">Sinorhizobium fredii (strain NBRC 101917 / NGR234)</name>
    <dbReference type="NCBI Taxonomy" id="394"/>
    <lineage>
        <taxon>Bacteria</taxon>
        <taxon>Pseudomonadati</taxon>
        <taxon>Pseudomonadota</taxon>
        <taxon>Alphaproteobacteria</taxon>
        <taxon>Hyphomicrobiales</taxon>
        <taxon>Rhizobiaceae</taxon>
        <taxon>Sinorhizobium/Ensifer group</taxon>
        <taxon>Sinorhizobium</taxon>
    </lineage>
</organism>
<gene>
    <name evidence="1" type="primary">recR</name>
    <name type="ordered locus">NGR_c35600</name>
</gene>
<keyword id="KW-0227">DNA damage</keyword>
<keyword id="KW-0233">DNA recombination</keyword>
<keyword id="KW-0234">DNA repair</keyword>
<keyword id="KW-0479">Metal-binding</keyword>
<keyword id="KW-1185">Reference proteome</keyword>
<keyword id="KW-0862">Zinc</keyword>
<keyword id="KW-0863">Zinc-finger</keyword>
<proteinExistence type="inferred from homology"/>
<name>RECR_SINFN</name>
<protein>
    <recommendedName>
        <fullName evidence="1">Recombination protein RecR</fullName>
    </recommendedName>
</protein>
<accession>C3MC58</accession>
<reference key="1">
    <citation type="journal article" date="2009" name="Appl. Environ. Microbiol.">
        <title>Rhizobium sp. strain NGR234 possesses a remarkable number of secretion systems.</title>
        <authorList>
            <person name="Schmeisser C."/>
            <person name="Liesegang H."/>
            <person name="Krysciak D."/>
            <person name="Bakkou N."/>
            <person name="Le Quere A."/>
            <person name="Wollherr A."/>
            <person name="Heinemeyer I."/>
            <person name="Morgenstern B."/>
            <person name="Pommerening-Roeser A."/>
            <person name="Flores M."/>
            <person name="Palacios R."/>
            <person name="Brenner S."/>
            <person name="Gottschalk G."/>
            <person name="Schmitz R.A."/>
            <person name="Broughton W.J."/>
            <person name="Perret X."/>
            <person name="Strittmatter A.W."/>
            <person name="Streit W.R."/>
        </authorList>
    </citation>
    <scope>NUCLEOTIDE SEQUENCE [LARGE SCALE GENOMIC DNA]</scope>
    <source>
        <strain>NBRC 101917 / NGR234</strain>
    </source>
</reference>
<feature type="chain" id="PRO_1000195404" description="Recombination protein RecR">
    <location>
        <begin position="1"/>
        <end position="201"/>
    </location>
</feature>
<feature type="domain" description="Toprim" evidence="1">
    <location>
        <begin position="83"/>
        <end position="178"/>
    </location>
</feature>
<feature type="zinc finger region" description="C4-type" evidence="1">
    <location>
        <begin position="60"/>
        <end position="75"/>
    </location>
</feature>
<evidence type="ECO:0000255" key="1">
    <source>
        <dbReference type="HAMAP-Rule" id="MF_00017"/>
    </source>
</evidence>
<comment type="function">
    <text evidence="1">May play a role in DNA repair. It seems to be involved in an RecBC-independent recombinational process of DNA repair. It may act with RecF and RecO.</text>
</comment>
<comment type="similarity">
    <text evidence="1">Belongs to the RecR family.</text>
</comment>